<keyword id="KW-0963">Cytoplasm</keyword>
<keyword id="KW-0251">Elongation factor</keyword>
<keyword id="KW-0342">GTP-binding</keyword>
<keyword id="KW-0378">Hydrolase</keyword>
<keyword id="KW-0460">Magnesium</keyword>
<keyword id="KW-0479">Metal-binding</keyword>
<keyword id="KW-0547">Nucleotide-binding</keyword>
<keyword id="KW-0648">Protein biosynthesis</keyword>
<protein>
    <recommendedName>
        <fullName evidence="2">Elongation factor Tu</fullName>
        <shortName evidence="2">EF-Tu</shortName>
        <ecNumber evidence="2">3.6.5.3</ecNumber>
    </recommendedName>
</protein>
<sequence length="394" mass="43408">MANEKFIRNKTHLNVGTIGHVDHGKTTLTAAITQVLSARGLAKSRAYDQIDNAPEERERGITIKTSHVEYETEKRHYAHVDCPGHADYVKNMITGAAQMDAAILVVSGADSVMPQTREHILLARQVGVPKIVVFLNKCDLSPDEQILELVEMEVRELLSQYDFPGDDIPVIRGSALKALEGDAHYVAQVNKLIETLDTYIEDPVREVDKPFLMPVEDVFTITGRGTVVTGRVERGQVKAGDEVEIVGLKETRKTIVTAVEMFKKDLEFAQAGDNVGALLRGINREDVQRGQVLAKPGSVKPHSKFIAQVYVLTKEEGGRHTAFFSQYRPQFYFRTTDITGVVELQGDVKMVMPGDNAELVVTLNNPIAIEEGTKFSIREGGKTVGAGSVSKLLN</sequence>
<evidence type="ECO:0000250" key="1"/>
<evidence type="ECO:0000255" key="2">
    <source>
        <dbReference type="HAMAP-Rule" id="MF_00118"/>
    </source>
</evidence>
<comment type="function">
    <text evidence="2">GTP hydrolase that promotes the GTP-dependent binding of aminoacyl-tRNA to the A-site of ribosomes during protein biosynthesis.</text>
</comment>
<comment type="catalytic activity">
    <reaction evidence="2">
        <text>GTP + H2O = GDP + phosphate + H(+)</text>
        <dbReference type="Rhea" id="RHEA:19669"/>
        <dbReference type="ChEBI" id="CHEBI:15377"/>
        <dbReference type="ChEBI" id="CHEBI:15378"/>
        <dbReference type="ChEBI" id="CHEBI:37565"/>
        <dbReference type="ChEBI" id="CHEBI:43474"/>
        <dbReference type="ChEBI" id="CHEBI:58189"/>
        <dbReference type="EC" id="3.6.5.3"/>
    </reaction>
    <physiologicalReaction direction="left-to-right" evidence="2">
        <dbReference type="Rhea" id="RHEA:19670"/>
    </physiologicalReaction>
</comment>
<comment type="subunit">
    <text evidence="2">Monomer.</text>
</comment>
<comment type="subcellular location">
    <subcellularLocation>
        <location evidence="2">Cytoplasm</location>
    </subcellularLocation>
</comment>
<comment type="similarity">
    <text evidence="2">Belongs to the TRAFAC class translation factor GTPase superfamily. Classic translation factor GTPase family. EF-Tu/EF-1A subfamily.</text>
</comment>
<name>EFTU_AYWBP</name>
<dbReference type="EC" id="3.6.5.3" evidence="2"/>
<dbReference type="EMBL" id="CP000061">
    <property type="protein sequence ID" value="ABC65573.1"/>
    <property type="molecule type" value="Genomic_DNA"/>
</dbReference>
<dbReference type="RefSeq" id="WP_011412737.1">
    <property type="nucleotide sequence ID" value="NC_007716.1"/>
</dbReference>
<dbReference type="SMR" id="Q2NJ20"/>
<dbReference type="STRING" id="322098.AYWB_456"/>
<dbReference type="KEGG" id="ayw:AYWB_456"/>
<dbReference type="eggNOG" id="COG0050">
    <property type="taxonomic scope" value="Bacteria"/>
</dbReference>
<dbReference type="HOGENOM" id="CLU_007265_0_0_14"/>
<dbReference type="OrthoDB" id="9804504at2"/>
<dbReference type="PhylomeDB" id="Q2NJ20"/>
<dbReference type="Proteomes" id="UP000001934">
    <property type="component" value="Chromosome"/>
</dbReference>
<dbReference type="GO" id="GO:0005829">
    <property type="term" value="C:cytosol"/>
    <property type="evidence" value="ECO:0007669"/>
    <property type="project" value="TreeGrafter"/>
</dbReference>
<dbReference type="GO" id="GO:0005525">
    <property type="term" value="F:GTP binding"/>
    <property type="evidence" value="ECO:0007669"/>
    <property type="project" value="UniProtKB-UniRule"/>
</dbReference>
<dbReference type="GO" id="GO:0003924">
    <property type="term" value="F:GTPase activity"/>
    <property type="evidence" value="ECO:0007669"/>
    <property type="project" value="InterPro"/>
</dbReference>
<dbReference type="GO" id="GO:0003746">
    <property type="term" value="F:translation elongation factor activity"/>
    <property type="evidence" value="ECO:0007669"/>
    <property type="project" value="UniProtKB-UniRule"/>
</dbReference>
<dbReference type="CDD" id="cd01884">
    <property type="entry name" value="EF_Tu"/>
    <property type="match status" value="1"/>
</dbReference>
<dbReference type="CDD" id="cd03697">
    <property type="entry name" value="EFTU_II"/>
    <property type="match status" value="1"/>
</dbReference>
<dbReference type="CDD" id="cd03707">
    <property type="entry name" value="EFTU_III"/>
    <property type="match status" value="1"/>
</dbReference>
<dbReference type="FunFam" id="2.40.30.10:FF:000001">
    <property type="entry name" value="Elongation factor Tu"/>
    <property type="match status" value="1"/>
</dbReference>
<dbReference type="FunFam" id="3.40.50.300:FF:000003">
    <property type="entry name" value="Elongation factor Tu"/>
    <property type="match status" value="1"/>
</dbReference>
<dbReference type="Gene3D" id="3.40.50.300">
    <property type="entry name" value="P-loop containing nucleotide triphosphate hydrolases"/>
    <property type="match status" value="1"/>
</dbReference>
<dbReference type="Gene3D" id="2.40.30.10">
    <property type="entry name" value="Translation factors"/>
    <property type="match status" value="2"/>
</dbReference>
<dbReference type="HAMAP" id="MF_00118_B">
    <property type="entry name" value="EF_Tu_B"/>
    <property type="match status" value="1"/>
</dbReference>
<dbReference type="InterPro" id="IPR041709">
    <property type="entry name" value="EF-Tu_GTP-bd"/>
</dbReference>
<dbReference type="InterPro" id="IPR050055">
    <property type="entry name" value="EF-Tu_GTPase"/>
</dbReference>
<dbReference type="InterPro" id="IPR004161">
    <property type="entry name" value="EFTu-like_2"/>
</dbReference>
<dbReference type="InterPro" id="IPR033720">
    <property type="entry name" value="EFTU_2"/>
</dbReference>
<dbReference type="InterPro" id="IPR031157">
    <property type="entry name" value="G_TR_CS"/>
</dbReference>
<dbReference type="InterPro" id="IPR027417">
    <property type="entry name" value="P-loop_NTPase"/>
</dbReference>
<dbReference type="InterPro" id="IPR005225">
    <property type="entry name" value="Small_GTP-bd"/>
</dbReference>
<dbReference type="InterPro" id="IPR000795">
    <property type="entry name" value="T_Tr_GTP-bd_dom"/>
</dbReference>
<dbReference type="InterPro" id="IPR009000">
    <property type="entry name" value="Transl_B-barrel_sf"/>
</dbReference>
<dbReference type="InterPro" id="IPR009001">
    <property type="entry name" value="Transl_elong_EF1A/Init_IF2_C"/>
</dbReference>
<dbReference type="InterPro" id="IPR004541">
    <property type="entry name" value="Transl_elong_EFTu/EF1A_bac/org"/>
</dbReference>
<dbReference type="InterPro" id="IPR004160">
    <property type="entry name" value="Transl_elong_EFTu/EF1A_C"/>
</dbReference>
<dbReference type="NCBIfam" id="TIGR00485">
    <property type="entry name" value="EF-Tu"/>
    <property type="match status" value="1"/>
</dbReference>
<dbReference type="NCBIfam" id="NF000766">
    <property type="entry name" value="PRK00049.1"/>
    <property type="match status" value="1"/>
</dbReference>
<dbReference type="NCBIfam" id="NF009372">
    <property type="entry name" value="PRK12735.1"/>
    <property type="match status" value="1"/>
</dbReference>
<dbReference type="NCBIfam" id="NF009373">
    <property type="entry name" value="PRK12736.1"/>
    <property type="match status" value="1"/>
</dbReference>
<dbReference type="NCBIfam" id="TIGR00231">
    <property type="entry name" value="small_GTP"/>
    <property type="match status" value="1"/>
</dbReference>
<dbReference type="PANTHER" id="PTHR43721:SF22">
    <property type="entry name" value="ELONGATION FACTOR TU, MITOCHONDRIAL"/>
    <property type="match status" value="1"/>
</dbReference>
<dbReference type="PANTHER" id="PTHR43721">
    <property type="entry name" value="ELONGATION FACTOR TU-RELATED"/>
    <property type="match status" value="1"/>
</dbReference>
<dbReference type="Pfam" id="PF00009">
    <property type="entry name" value="GTP_EFTU"/>
    <property type="match status" value="1"/>
</dbReference>
<dbReference type="Pfam" id="PF03144">
    <property type="entry name" value="GTP_EFTU_D2"/>
    <property type="match status" value="1"/>
</dbReference>
<dbReference type="Pfam" id="PF03143">
    <property type="entry name" value="GTP_EFTU_D3"/>
    <property type="match status" value="1"/>
</dbReference>
<dbReference type="PRINTS" id="PR00315">
    <property type="entry name" value="ELONGATNFCT"/>
</dbReference>
<dbReference type="SUPFAM" id="SSF50465">
    <property type="entry name" value="EF-Tu/eEF-1alpha/eIF2-gamma C-terminal domain"/>
    <property type="match status" value="1"/>
</dbReference>
<dbReference type="SUPFAM" id="SSF52540">
    <property type="entry name" value="P-loop containing nucleoside triphosphate hydrolases"/>
    <property type="match status" value="1"/>
</dbReference>
<dbReference type="SUPFAM" id="SSF50447">
    <property type="entry name" value="Translation proteins"/>
    <property type="match status" value="1"/>
</dbReference>
<dbReference type="PROSITE" id="PS00301">
    <property type="entry name" value="G_TR_1"/>
    <property type="match status" value="1"/>
</dbReference>
<dbReference type="PROSITE" id="PS51722">
    <property type="entry name" value="G_TR_2"/>
    <property type="match status" value="1"/>
</dbReference>
<organism>
    <name type="scientific">Aster yellows witches'-broom phytoplasma (strain AYWB)</name>
    <dbReference type="NCBI Taxonomy" id="322098"/>
    <lineage>
        <taxon>Bacteria</taxon>
        <taxon>Bacillati</taxon>
        <taxon>Mycoplasmatota</taxon>
        <taxon>Mollicutes</taxon>
        <taxon>Acholeplasmatales</taxon>
        <taxon>Acholeplasmataceae</taxon>
        <taxon>Candidatus Phytoplasma</taxon>
        <taxon>16SrI (Aster yellows group)</taxon>
    </lineage>
</organism>
<reference key="1">
    <citation type="journal article" date="2006" name="J. Bacteriol.">
        <title>Living with genome instability: the adaptation of phytoplasmas to diverse environments of their insect and plant hosts.</title>
        <authorList>
            <person name="Bai X."/>
            <person name="Zhang J."/>
            <person name="Ewing A."/>
            <person name="Miller S.A."/>
            <person name="Jancso Radek A."/>
            <person name="Shevchenko D.V."/>
            <person name="Tsukerman K."/>
            <person name="Walunas T."/>
            <person name="Lapidus A."/>
            <person name="Campbell J.W."/>
            <person name="Hogenhout S.A."/>
        </authorList>
    </citation>
    <scope>NUCLEOTIDE SEQUENCE [LARGE SCALE GENOMIC DNA]</scope>
    <source>
        <strain>AYWB</strain>
    </source>
</reference>
<proteinExistence type="inferred from homology"/>
<feature type="chain" id="PRO_1000015602" description="Elongation factor Tu">
    <location>
        <begin position="1"/>
        <end position="394"/>
    </location>
</feature>
<feature type="domain" description="tr-type G">
    <location>
        <begin position="10"/>
        <end position="204"/>
    </location>
</feature>
<feature type="region of interest" description="G1" evidence="1">
    <location>
        <begin position="19"/>
        <end position="26"/>
    </location>
</feature>
<feature type="region of interest" description="G2" evidence="1">
    <location>
        <begin position="60"/>
        <end position="64"/>
    </location>
</feature>
<feature type="region of interest" description="G3" evidence="1">
    <location>
        <begin position="81"/>
        <end position="84"/>
    </location>
</feature>
<feature type="region of interest" description="G4" evidence="1">
    <location>
        <begin position="136"/>
        <end position="139"/>
    </location>
</feature>
<feature type="region of interest" description="G5" evidence="1">
    <location>
        <begin position="174"/>
        <end position="176"/>
    </location>
</feature>
<feature type="binding site" evidence="2">
    <location>
        <begin position="19"/>
        <end position="26"/>
    </location>
    <ligand>
        <name>GTP</name>
        <dbReference type="ChEBI" id="CHEBI:37565"/>
    </ligand>
</feature>
<feature type="binding site" evidence="2">
    <location>
        <position position="26"/>
    </location>
    <ligand>
        <name>Mg(2+)</name>
        <dbReference type="ChEBI" id="CHEBI:18420"/>
    </ligand>
</feature>
<feature type="binding site" evidence="2">
    <location>
        <begin position="81"/>
        <end position="85"/>
    </location>
    <ligand>
        <name>GTP</name>
        <dbReference type="ChEBI" id="CHEBI:37565"/>
    </ligand>
</feature>
<feature type="binding site" evidence="2">
    <location>
        <begin position="136"/>
        <end position="139"/>
    </location>
    <ligand>
        <name>GTP</name>
        <dbReference type="ChEBI" id="CHEBI:37565"/>
    </ligand>
</feature>
<accession>Q2NJ20</accession>
<gene>
    <name evidence="2" type="primary">tuf</name>
    <name type="ordered locus">AYWB_456</name>
</gene>